<dbReference type="EC" id="2.1.2.9" evidence="1"/>
<dbReference type="EMBL" id="CP001219">
    <property type="protein sequence ID" value="ACK78775.1"/>
    <property type="molecule type" value="Genomic_DNA"/>
</dbReference>
<dbReference type="RefSeq" id="WP_012535749.1">
    <property type="nucleotide sequence ID" value="NC_011761.1"/>
</dbReference>
<dbReference type="SMR" id="B7J3C1"/>
<dbReference type="STRING" id="243159.AFE_0020"/>
<dbReference type="PaxDb" id="243159-AFE_0020"/>
<dbReference type="GeneID" id="65279421"/>
<dbReference type="KEGG" id="afr:AFE_0020"/>
<dbReference type="eggNOG" id="COG0223">
    <property type="taxonomic scope" value="Bacteria"/>
</dbReference>
<dbReference type="HOGENOM" id="CLU_033347_1_2_6"/>
<dbReference type="Proteomes" id="UP000001362">
    <property type="component" value="Chromosome"/>
</dbReference>
<dbReference type="GO" id="GO:0005829">
    <property type="term" value="C:cytosol"/>
    <property type="evidence" value="ECO:0007669"/>
    <property type="project" value="TreeGrafter"/>
</dbReference>
<dbReference type="GO" id="GO:0004479">
    <property type="term" value="F:methionyl-tRNA formyltransferase activity"/>
    <property type="evidence" value="ECO:0007669"/>
    <property type="project" value="UniProtKB-UniRule"/>
</dbReference>
<dbReference type="CDD" id="cd08646">
    <property type="entry name" value="FMT_core_Met-tRNA-FMT_N"/>
    <property type="match status" value="1"/>
</dbReference>
<dbReference type="CDD" id="cd08704">
    <property type="entry name" value="Met_tRNA_FMT_C"/>
    <property type="match status" value="1"/>
</dbReference>
<dbReference type="Gene3D" id="3.10.25.10">
    <property type="entry name" value="Formyl transferase, C-terminal domain"/>
    <property type="match status" value="1"/>
</dbReference>
<dbReference type="Gene3D" id="3.40.50.170">
    <property type="entry name" value="Formyl transferase, N-terminal domain"/>
    <property type="match status" value="1"/>
</dbReference>
<dbReference type="HAMAP" id="MF_00182">
    <property type="entry name" value="Formyl_trans"/>
    <property type="match status" value="1"/>
</dbReference>
<dbReference type="InterPro" id="IPR005794">
    <property type="entry name" value="Fmt"/>
</dbReference>
<dbReference type="InterPro" id="IPR005793">
    <property type="entry name" value="Formyl_trans_C"/>
</dbReference>
<dbReference type="InterPro" id="IPR037022">
    <property type="entry name" value="Formyl_trans_C_sf"/>
</dbReference>
<dbReference type="InterPro" id="IPR002376">
    <property type="entry name" value="Formyl_transf_N"/>
</dbReference>
<dbReference type="InterPro" id="IPR036477">
    <property type="entry name" value="Formyl_transf_N_sf"/>
</dbReference>
<dbReference type="InterPro" id="IPR011034">
    <property type="entry name" value="Formyl_transferase-like_C_sf"/>
</dbReference>
<dbReference type="InterPro" id="IPR044135">
    <property type="entry name" value="Met-tRNA-FMT_C"/>
</dbReference>
<dbReference type="InterPro" id="IPR041711">
    <property type="entry name" value="Met-tRNA-FMT_N"/>
</dbReference>
<dbReference type="NCBIfam" id="TIGR00460">
    <property type="entry name" value="fmt"/>
    <property type="match status" value="1"/>
</dbReference>
<dbReference type="PANTHER" id="PTHR11138">
    <property type="entry name" value="METHIONYL-TRNA FORMYLTRANSFERASE"/>
    <property type="match status" value="1"/>
</dbReference>
<dbReference type="PANTHER" id="PTHR11138:SF5">
    <property type="entry name" value="METHIONYL-TRNA FORMYLTRANSFERASE, MITOCHONDRIAL"/>
    <property type="match status" value="1"/>
</dbReference>
<dbReference type="Pfam" id="PF02911">
    <property type="entry name" value="Formyl_trans_C"/>
    <property type="match status" value="1"/>
</dbReference>
<dbReference type="Pfam" id="PF00551">
    <property type="entry name" value="Formyl_trans_N"/>
    <property type="match status" value="1"/>
</dbReference>
<dbReference type="SUPFAM" id="SSF50486">
    <property type="entry name" value="FMT C-terminal domain-like"/>
    <property type="match status" value="1"/>
</dbReference>
<dbReference type="SUPFAM" id="SSF53328">
    <property type="entry name" value="Formyltransferase"/>
    <property type="match status" value="1"/>
</dbReference>
<comment type="function">
    <text evidence="1">Attaches a formyl group to the free amino group of methionyl-tRNA(fMet). The formyl group appears to play a dual role in the initiator identity of N-formylmethionyl-tRNA by promoting its recognition by IF2 and preventing the misappropriation of this tRNA by the elongation apparatus.</text>
</comment>
<comment type="catalytic activity">
    <reaction evidence="1">
        <text>L-methionyl-tRNA(fMet) + (6R)-10-formyltetrahydrofolate = N-formyl-L-methionyl-tRNA(fMet) + (6S)-5,6,7,8-tetrahydrofolate + H(+)</text>
        <dbReference type="Rhea" id="RHEA:24380"/>
        <dbReference type="Rhea" id="RHEA-COMP:9952"/>
        <dbReference type="Rhea" id="RHEA-COMP:9953"/>
        <dbReference type="ChEBI" id="CHEBI:15378"/>
        <dbReference type="ChEBI" id="CHEBI:57453"/>
        <dbReference type="ChEBI" id="CHEBI:78530"/>
        <dbReference type="ChEBI" id="CHEBI:78844"/>
        <dbReference type="ChEBI" id="CHEBI:195366"/>
        <dbReference type="EC" id="2.1.2.9"/>
    </reaction>
</comment>
<comment type="similarity">
    <text evidence="1">Belongs to the Fmt family.</text>
</comment>
<protein>
    <recommendedName>
        <fullName evidence="1">Methionyl-tRNA formyltransferase</fullName>
        <ecNumber evidence="1">2.1.2.9</ecNumber>
    </recommendedName>
</protein>
<feature type="chain" id="PRO_1000203844" description="Methionyl-tRNA formyltransferase">
    <location>
        <begin position="1"/>
        <end position="313"/>
    </location>
</feature>
<feature type="binding site" evidence="1">
    <location>
        <begin position="113"/>
        <end position="116"/>
    </location>
    <ligand>
        <name>(6S)-5,6,7,8-tetrahydrofolate</name>
        <dbReference type="ChEBI" id="CHEBI:57453"/>
    </ligand>
</feature>
<evidence type="ECO:0000255" key="1">
    <source>
        <dbReference type="HAMAP-Rule" id="MF_00182"/>
    </source>
</evidence>
<accession>B7J3C1</accession>
<gene>
    <name evidence="1" type="primary">fmt</name>
    <name type="ordered locus">AFE_0020</name>
</gene>
<organism>
    <name type="scientific">Acidithiobacillus ferrooxidans (strain ATCC 23270 / DSM 14882 / CIP 104768 / NCIMB 8455)</name>
    <name type="common">Ferrobacillus ferrooxidans (strain ATCC 23270)</name>
    <dbReference type="NCBI Taxonomy" id="243159"/>
    <lineage>
        <taxon>Bacteria</taxon>
        <taxon>Pseudomonadati</taxon>
        <taxon>Pseudomonadota</taxon>
        <taxon>Acidithiobacillia</taxon>
        <taxon>Acidithiobacillales</taxon>
        <taxon>Acidithiobacillaceae</taxon>
        <taxon>Acidithiobacillus</taxon>
    </lineage>
</organism>
<reference key="1">
    <citation type="journal article" date="2008" name="BMC Genomics">
        <title>Acidithiobacillus ferrooxidans metabolism: from genome sequence to industrial applications.</title>
        <authorList>
            <person name="Valdes J."/>
            <person name="Pedroso I."/>
            <person name="Quatrini R."/>
            <person name="Dodson R.J."/>
            <person name="Tettelin H."/>
            <person name="Blake R. II"/>
            <person name="Eisen J.A."/>
            <person name="Holmes D.S."/>
        </authorList>
    </citation>
    <scope>NUCLEOTIDE SEQUENCE [LARGE SCALE GENOMIC DNA]</scope>
    <source>
        <strain>ATCC 23270 / DSM 14882 / CIP 104768 / NCIMB 8455</strain>
    </source>
</reference>
<name>FMT_ACIF2</name>
<sequence>MTEKQRIVFAGTPEFARITLAELRQGPEAVVGVFTQPDRPAGRGRTLQASPVKQEALAAGIPVFQPESCKTGEALELLRSLAPDLLIVVAYGQILPQAILALPTRGAINVHASLLPAWRGAAPIARAIAAGDKESGVAIMQMEAGLDSGPVLWEERLPIAADDTAASLHDRLARLGGKALRHVLDDLWAERLKPVPQDPALVTYAHKLKKEEALLDWRLPAATLERLVRAFNPSPVAHTLFRDKGLRVWQARVLGAGGDQAPGSISAVEKDGVVVTCGEDRLQLLAVQPAGKGVLSGSDFARGYRPQVGEVLG</sequence>
<keyword id="KW-0648">Protein biosynthesis</keyword>
<keyword id="KW-1185">Reference proteome</keyword>
<keyword id="KW-0808">Transferase</keyword>
<proteinExistence type="inferred from homology"/>